<sequence>MKKKVDTEKQITSWASDLASKNETKVQEKLILSSYIQDIENHVYFPKAMISLEKKLRDQNNICALSKEVNQFYFKVVEVNQRKSWMVGLIV</sequence>
<keyword id="KW-0079">Bacteriocin immunity</keyword>
<keyword id="KW-0614">Plasmid</keyword>
<organism>
    <name type="scientific">Lactococcus lactis subsp. cremoris</name>
    <name type="common">Streptococcus cremoris</name>
    <dbReference type="NCBI Taxonomy" id="1359"/>
    <lineage>
        <taxon>Bacteria</taxon>
        <taxon>Bacillati</taxon>
        <taxon>Bacillota</taxon>
        <taxon>Bacilli</taxon>
        <taxon>Lactobacillales</taxon>
        <taxon>Streptococcaceae</taxon>
        <taxon>Lactococcus</taxon>
    </lineage>
</organism>
<proteinExistence type="predicted"/>
<feature type="chain" id="PRO_0000206199" description="Lactococcin-B immunity protein">
    <location>
        <begin position="1"/>
        <end position="91"/>
    </location>
</feature>
<name>LCIB_LACLC</name>
<dbReference type="EMBL" id="S38128">
    <property type="protein sequence ID" value="AAB22373.1"/>
    <property type="molecule type" value="Genomic_DNA"/>
</dbReference>
<dbReference type="PIR" id="C43940">
    <property type="entry name" value="C43940"/>
</dbReference>
<dbReference type="RefSeq" id="WP_032488552.1">
    <property type="nucleotide sequence ID" value="NZ_WJUX01000070.1"/>
</dbReference>
<dbReference type="SMR" id="P35517"/>
<dbReference type="GO" id="GO:0030153">
    <property type="term" value="P:bacteriocin immunity"/>
    <property type="evidence" value="ECO:0007669"/>
    <property type="project" value="UniProtKB-KW"/>
</dbReference>
<dbReference type="CDD" id="cd21059">
    <property type="entry name" value="LciA-like"/>
    <property type="match status" value="1"/>
</dbReference>
<gene>
    <name type="primary">lciB</name>
</gene>
<protein>
    <recommendedName>
        <fullName>Lactococcin-B immunity protein</fullName>
    </recommendedName>
</protein>
<comment type="function">
    <text>Imparts immunity to lactococcin-B to naturally sensitive host strains.</text>
</comment>
<geneLocation type="plasmid">
    <name>p9B4-6</name>
</geneLocation>
<accession>P35517</accession>
<reference key="1">
    <citation type="journal article" date="1992" name="Appl. Environ. Microbiol.">
        <title>Cloning, sequencing, and expression in Escherichia coli of lcnB, a third bacteriocin determinant from the lactococcal bacteriocin plasmid p9B4-6.</title>
        <authorList>
            <person name="van Belkum M.J."/>
            <person name="Kok J."/>
            <person name="Venema G."/>
        </authorList>
    </citation>
    <scope>NUCLEOTIDE SEQUENCE [GENOMIC DNA]</scope>
    <source>
        <strain>9B4</strain>
    </source>
</reference>